<organism>
    <name type="scientific">Burkholderia lata (strain ATCC 17760 / DSM 23089 / LMG 22485 / NCIMB 9086 / R18194 / 383)</name>
    <dbReference type="NCBI Taxonomy" id="482957"/>
    <lineage>
        <taxon>Bacteria</taxon>
        <taxon>Pseudomonadati</taxon>
        <taxon>Pseudomonadota</taxon>
        <taxon>Betaproteobacteria</taxon>
        <taxon>Burkholderiales</taxon>
        <taxon>Burkholderiaceae</taxon>
        <taxon>Burkholderia</taxon>
        <taxon>Burkholderia cepacia complex</taxon>
    </lineage>
</organism>
<comment type="function">
    <text evidence="1">Catalyzes the phosphorylation of pantothenate (Pan), the first step in CoA biosynthesis.</text>
</comment>
<comment type="catalytic activity">
    <reaction evidence="1">
        <text>(R)-pantothenate + ATP = (R)-4'-phosphopantothenate + ADP + H(+)</text>
        <dbReference type="Rhea" id="RHEA:16373"/>
        <dbReference type="ChEBI" id="CHEBI:10986"/>
        <dbReference type="ChEBI" id="CHEBI:15378"/>
        <dbReference type="ChEBI" id="CHEBI:29032"/>
        <dbReference type="ChEBI" id="CHEBI:30616"/>
        <dbReference type="ChEBI" id="CHEBI:456216"/>
        <dbReference type="EC" id="2.7.1.33"/>
    </reaction>
</comment>
<comment type="cofactor">
    <cofactor evidence="1">
        <name>NH4(+)</name>
        <dbReference type="ChEBI" id="CHEBI:28938"/>
    </cofactor>
    <cofactor evidence="1">
        <name>K(+)</name>
        <dbReference type="ChEBI" id="CHEBI:29103"/>
    </cofactor>
    <text evidence="1">A monovalent cation. Ammonium or potassium.</text>
</comment>
<comment type="pathway">
    <text evidence="1">Cofactor biosynthesis; coenzyme A biosynthesis; CoA from (R)-pantothenate: step 1/5.</text>
</comment>
<comment type="subunit">
    <text evidence="1">Homodimer.</text>
</comment>
<comment type="subcellular location">
    <subcellularLocation>
        <location evidence="1">Cytoplasm</location>
    </subcellularLocation>
</comment>
<comment type="similarity">
    <text evidence="1">Belongs to the type III pantothenate kinase family.</text>
</comment>
<accession>Q39CH4</accession>
<evidence type="ECO:0000255" key="1">
    <source>
        <dbReference type="HAMAP-Rule" id="MF_01274"/>
    </source>
</evidence>
<dbReference type="EC" id="2.7.1.33" evidence="1"/>
<dbReference type="EMBL" id="CP000151">
    <property type="protein sequence ID" value="ABB09842.1"/>
    <property type="molecule type" value="Genomic_DNA"/>
</dbReference>
<dbReference type="RefSeq" id="WP_011353349.1">
    <property type="nucleotide sequence ID" value="NC_007510.1"/>
</dbReference>
<dbReference type="SMR" id="Q39CH4"/>
<dbReference type="GeneID" id="45096121"/>
<dbReference type="KEGG" id="bur:Bcep18194_A6248"/>
<dbReference type="PATRIC" id="fig|482957.22.peg.3262"/>
<dbReference type="HOGENOM" id="CLU_066627_0_0_4"/>
<dbReference type="UniPathway" id="UPA00241">
    <property type="reaction ID" value="UER00352"/>
</dbReference>
<dbReference type="Proteomes" id="UP000002705">
    <property type="component" value="Chromosome 1"/>
</dbReference>
<dbReference type="GO" id="GO:0005737">
    <property type="term" value="C:cytoplasm"/>
    <property type="evidence" value="ECO:0007669"/>
    <property type="project" value="UniProtKB-SubCell"/>
</dbReference>
<dbReference type="GO" id="GO:0005524">
    <property type="term" value="F:ATP binding"/>
    <property type="evidence" value="ECO:0007669"/>
    <property type="project" value="UniProtKB-UniRule"/>
</dbReference>
<dbReference type="GO" id="GO:0004594">
    <property type="term" value="F:pantothenate kinase activity"/>
    <property type="evidence" value="ECO:0007669"/>
    <property type="project" value="UniProtKB-UniRule"/>
</dbReference>
<dbReference type="GO" id="GO:0015937">
    <property type="term" value="P:coenzyme A biosynthetic process"/>
    <property type="evidence" value="ECO:0007669"/>
    <property type="project" value="UniProtKB-UniRule"/>
</dbReference>
<dbReference type="CDD" id="cd24015">
    <property type="entry name" value="ASKHA_NBD_PanK-III"/>
    <property type="match status" value="1"/>
</dbReference>
<dbReference type="Gene3D" id="3.30.420.40">
    <property type="match status" value="2"/>
</dbReference>
<dbReference type="HAMAP" id="MF_01274">
    <property type="entry name" value="Pantothen_kinase_3"/>
    <property type="match status" value="1"/>
</dbReference>
<dbReference type="InterPro" id="IPR043129">
    <property type="entry name" value="ATPase_NBD"/>
</dbReference>
<dbReference type="InterPro" id="IPR004619">
    <property type="entry name" value="Type_III_PanK"/>
</dbReference>
<dbReference type="NCBIfam" id="TIGR00671">
    <property type="entry name" value="baf"/>
    <property type="match status" value="1"/>
</dbReference>
<dbReference type="NCBIfam" id="NF009868">
    <property type="entry name" value="PRK13328.1-4"/>
    <property type="match status" value="1"/>
</dbReference>
<dbReference type="PANTHER" id="PTHR34265">
    <property type="entry name" value="TYPE III PANTOTHENATE KINASE"/>
    <property type="match status" value="1"/>
</dbReference>
<dbReference type="PANTHER" id="PTHR34265:SF1">
    <property type="entry name" value="TYPE III PANTOTHENATE KINASE"/>
    <property type="match status" value="1"/>
</dbReference>
<dbReference type="Pfam" id="PF03309">
    <property type="entry name" value="Pan_kinase"/>
    <property type="match status" value="1"/>
</dbReference>
<dbReference type="SUPFAM" id="SSF53067">
    <property type="entry name" value="Actin-like ATPase domain"/>
    <property type="match status" value="2"/>
</dbReference>
<sequence length="266" mass="27825">MNEPHLLIDAGNSRIKWALADAQRTLVETGAFGHTRDGGADPDWSTLPRPRGAWISNVAGADVAARLDTLLDARWPGLPRTTIRSRHTQCGVTNGYTTPDQLGSDRWAGLIGAHAAFPGEHLLIATFGTATTLEALRADGRFTGGLIAPGWALMMRALGTHTAQLPTLTTDIASGLLAGAQAEPFQVDTPRSLSAGCLYAQAGLIERAWRDLADAWQAPVRLVLAGGAADDVARALTLPHTRHDALILSGLALIAAEAAAATAAQA</sequence>
<proteinExistence type="inferred from homology"/>
<gene>
    <name evidence="1" type="primary">coaX</name>
    <name type="ordered locus">Bcep18194_A6248</name>
</gene>
<keyword id="KW-0067">ATP-binding</keyword>
<keyword id="KW-0173">Coenzyme A biosynthesis</keyword>
<keyword id="KW-0963">Cytoplasm</keyword>
<keyword id="KW-0418">Kinase</keyword>
<keyword id="KW-0547">Nucleotide-binding</keyword>
<keyword id="KW-0630">Potassium</keyword>
<keyword id="KW-0808">Transferase</keyword>
<protein>
    <recommendedName>
        <fullName evidence="1">Type III pantothenate kinase</fullName>
        <ecNumber evidence="1">2.7.1.33</ecNumber>
    </recommendedName>
    <alternativeName>
        <fullName evidence="1">PanK-III</fullName>
    </alternativeName>
    <alternativeName>
        <fullName evidence="1">Pantothenic acid kinase</fullName>
    </alternativeName>
</protein>
<reference key="1">
    <citation type="submission" date="2005-10" db="EMBL/GenBank/DDBJ databases">
        <title>Complete sequence of chromosome 1 of Burkholderia sp. 383.</title>
        <authorList>
            <consortium name="US DOE Joint Genome Institute"/>
            <person name="Copeland A."/>
            <person name="Lucas S."/>
            <person name="Lapidus A."/>
            <person name="Barry K."/>
            <person name="Detter J.C."/>
            <person name="Glavina T."/>
            <person name="Hammon N."/>
            <person name="Israni S."/>
            <person name="Pitluck S."/>
            <person name="Chain P."/>
            <person name="Malfatti S."/>
            <person name="Shin M."/>
            <person name="Vergez L."/>
            <person name="Schmutz J."/>
            <person name="Larimer F."/>
            <person name="Land M."/>
            <person name="Kyrpides N."/>
            <person name="Lykidis A."/>
            <person name="Richardson P."/>
        </authorList>
    </citation>
    <scope>NUCLEOTIDE SEQUENCE [LARGE SCALE GENOMIC DNA]</scope>
    <source>
        <strain>ATCC 17760 / DSM 23089 / LMG 22485 / NCIMB 9086 / R18194 / 383</strain>
    </source>
</reference>
<feature type="chain" id="PRO_0000270868" description="Type III pantothenate kinase">
    <location>
        <begin position="1"/>
        <end position="266"/>
    </location>
</feature>
<feature type="active site" description="Proton acceptor" evidence="1">
    <location>
        <position position="105"/>
    </location>
</feature>
<feature type="binding site" evidence="1">
    <location>
        <begin position="9"/>
        <end position="16"/>
    </location>
    <ligand>
        <name>ATP</name>
        <dbReference type="ChEBI" id="CHEBI:30616"/>
    </ligand>
</feature>
<feature type="binding site" evidence="1">
    <location>
        <position position="96"/>
    </location>
    <ligand>
        <name>substrate</name>
    </ligand>
</feature>
<feature type="binding site" evidence="1">
    <location>
        <begin position="103"/>
        <end position="106"/>
    </location>
    <ligand>
        <name>substrate</name>
    </ligand>
</feature>
<feature type="binding site" evidence="1">
    <location>
        <position position="129"/>
    </location>
    <ligand>
        <name>ATP</name>
        <dbReference type="ChEBI" id="CHEBI:30616"/>
    </ligand>
</feature>
<feature type="binding site" evidence="1">
    <location>
        <position position="189"/>
    </location>
    <ligand>
        <name>substrate</name>
    </ligand>
</feature>
<name>COAX_BURL3</name>